<organism>
    <name type="scientific">Escherichia coli (strain K12 / DH10B)</name>
    <dbReference type="NCBI Taxonomy" id="316385"/>
    <lineage>
        <taxon>Bacteria</taxon>
        <taxon>Pseudomonadati</taxon>
        <taxon>Pseudomonadota</taxon>
        <taxon>Gammaproteobacteria</taxon>
        <taxon>Enterobacterales</taxon>
        <taxon>Enterobacteriaceae</taxon>
        <taxon>Escherichia</taxon>
    </lineage>
</organism>
<comment type="function">
    <text evidence="1">Catalyzes the addition and repair of the essential 3'-terminal CCA sequence in tRNAs without using a nucleic acid template. Adds these three nucleotides in the order of C, C, and A to the tRNA nucleotide-73, using CTP and ATP as substrates and producing inorganic pyrophosphate. tRNA 3'-terminal CCA addition is required both for tRNA processing and repair. Also involved in tRNA surveillance by mediating tandem CCA addition to generate a CCACCA at the 3' terminus of unstable tRNAs. While stable tRNAs receive only 3'-terminal CCA, unstable tRNAs are marked with CCACCA and rapidly degraded.</text>
</comment>
<comment type="catalytic activity">
    <reaction evidence="1">
        <text>a tRNA precursor + 2 CTP + ATP = a tRNA with a 3' CCA end + 3 diphosphate</text>
        <dbReference type="Rhea" id="RHEA:14433"/>
        <dbReference type="Rhea" id="RHEA-COMP:10465"/>
        <dbReference type="Rhea" id="RHEA-COMP:10468"/>
        <dbReference type="ChEBI" id="CHEBI:30616"/>
        <dbReference type="ChEBI" id="CHEBI:33019"/>
        <dbReference type="ChEBI" id="CHEBI:37563"/>
        <dbReference type="ChEBI" id="CHEBI:74896"/>
        <dbReference type="ChEBI" id="CHEBI:83071"/>
        <dbReference type="EC" id="2.7.7.72"/>
    </reaction>
</comment>
<comment type="catalytic activity">
    <reaction evidence="1">
        <text>a tRNA with a 3' CCA end + 2 CTP + ATP = a tRNA with a 3' CCACCA end + 3 diphosphate</text>
        <dbReference type="Rhea" id="RHEA:76235"/>
        <dbReference type="Rhea" id="RHEA-COMP:10468"/>
        <dbReference type="Rhea" id="RHEA-COMP:18655"/>
        <dbReference type="ChEBI" id="CHEBI:30616"/>
        <dbReference type="ChEBI" id="CHEBI:33019"/>
        <dbReference type="ChEBI" id="CHEBI:37563"/>
        <dbReference type="ChEBI" id="CHEBI:83071"/>
        <dbReference type="ChEBI" id="CHEBI:195187"/>
    </reaction>
    <physiologicalReaction direction="left-to-right" evidence="1">
        <dbReference type="Rhea" id="RHEA:76236"/>
    </physiologicalReaction>
</comment>
<comment type="cofactor">
    <cofactor evidence="1">
        <name>Mg(2+)</name>
        <dbReference type="ChEBI" id="CHEBI:18420"/>
    </cofactor>
    <text evidence="1">Magnesium is required for nucleotidyltransferase activity.</text>
</comment>
<comment type="cofactor">
    <cofactor evidence="1">
        <name>Ni(2+)</name>
        <dbReference type="ChEBI" id="CHEBI:49786"/>
    </cofactor>
    <text evidence="1">Nickel for phosphatase activity.</text>
</comment>
<comment type="subunit">
    <text evidence="1">Monomer. Can also form homodimers and oligomers.</text>
</comment>
<comment type="domain">
    <text evidence="1">Comprises two domains: an N-terminal domain containing the nucleotidyltransferase activity and a C-terminal HD domain associated with both phosphodiesterase and phosphatase activities.</text>
</comment>
<comment type="miscellaneous">
    <text evidence="1">A single active site specifically recognizes both ATP and CTP and is responsible for their addition.</text>
</comment>
<comment type="similarity">
    <text evidence="1">Belongs to the tRNA nucleotidyltransferase/poly(A) polymerase family. Bacterial CCA-adding enzyme type 1 subfamily.</text>
</comment>
<reference key="1">
    <citation type="journal article" date="2008" name="J. Bacteriol.">
        <title>The complete genome sequence of Escherichia coli DH10B: insights into the biology of a laboratory workhorse.</title>
        <authorList>
            <person name="Durfee T."/>
            <person name="Nelson R."/>
            <person name="Baldwin S."/>
            <person name="Plunkett G. III"/>
            <person name="Burland V."/>
            <person name="Mau B."/>
            <person name="Petrosino J.F."/>
            <person name="Qin X."/>
            <person name="Muzny D.M."/>
            <person name="Ayele M."/>
            <person name="Gibbs R.A."/>
            <person name="Csorgo B."/>
            <person name="Posfai G."/>
            <person name="Weinstock G.M."/>
            <person name="Blattner F.R."/>
        </authorList>
    </citation>
    <scope>NUCLEOTIDE SEQUENCE [LARGE SCALE GENOMIC DNA]</scope>
    <source>
        <strain>K12 / DH10B</strain>
    </source>
</reference>
<gene>
    <name evidence="1" type="primary">cca</name>
    <name type="ordered locus">ECDH10B_3231</name>
</gene>
<dbReference type="EC" id="2.7.7.72" evidence="1"/>
<dbReference type="EC" id="3.1.3.-" evidence="1"/>
<dbReference type="EC" id="3.1.4.-" evidence="1"/>
<dbReference type="EMBL" id="CP000948">
    <property type="protein sequence ID" value="ACB04141.1"/>
    <property type="molecule type" value="Genomic_DNA"/>
</dbReference>
<dbReference type="RefSeq" id="WP_000708487.1">
    <property type="nucleotide sequence ID" value="NC_010473.1"/>
</dbReference>
<dbReference type="SMR" id="B1XG61"/>
<dbReference type="KEGG" id="ecd:ECDH10B_3231"/>
<dbReference type="HOGENOM" id="CLU_015961_1_1_6"/>
<dbReference type="GO" id="GO:0005524">
    <property type="term" value="F:ATP binding"/>
    <property type="evidence" value="ECO:0007669"/>
    <property type="project" value="UniProtKB-UniRule"/>
</dbReference>
<dbReference type="GO" id="GO:0004810">
    <property type="term" value="F:CCA tRNA nucleotidyltransferase activity"/>
    <property type="evidence" value="ECO:0007669"/>
    <property type="project" value="UniProtKB-UniRule"/>
</dbReference>
<dbReference type="GO" id="GO:0004112">
    <property type="term" value="F:cyclic-nucleotide phosphodiesterase activity"/>
    <property type="evidence" value="ECO:0007669"/>
    <property type="project" value="UniProtKB-UniRule"/>
</dbReference>
<dbReference type="GO" id="GO:0000287">
    <property type="term" value="F:magnesium ion binding"/>
    <property type="evidence" value="ECO:0007669"/>
    <property type="project" value="UniProtKB-UniRule"/>
</dbReference>
<dbReference type="GO" id="GO:0016791">
    <property type="term" value="F:phosphatase activity"/>
    <property type="evidence" value="ECO:0007669"/>
    <property type="project" value="UniProtKB-UniRule"/>
</dbReference>
<dbReference type="GO" id="GO:0000049">
    <property type="term" value="F:tRNA binding"/>
    <property type="evidence" value="ECO:0007669"/>
    <property type="project" value="UniProtKB-UniRule"/>
</dbReference>
<dbReference type="GO" id="GO:0042245">
    <property type="term" value="P:RNA repair"/>
    <property type="evidence" value="ECO:0007669"/>
    <property type="project" value="UniProtKB-KW"/>
</dbReference>
<dbReference type="GO" id="GO:0001680">
    <property type="term" value="P:tRNA 3'-terminal CCA addition"/>
    <property type="evidence" value="ECO:0007669"/>
    <property type="project" value="UniProtKB-UniRule"/>
</dbReference>
<dbReference type="CDD" id="cd00077">
    <property type="entry name" value="HDc"/>
    <property type="match status" value="1"/>
</dbReference>
<dbReference type="CDD" id="cd05398">
    <property type="entry name" value="NT_ClassII-CCAase"/>
    <property type="match status" value="1"/>
</dbReference>
<dbReference type="FunFam" id="1.10.3090.10:FF:000001">
    <property type="entry name" value="Multifunctional CCA protein"/>
    <property type="match status" value="1"/>
</dbReference>
<dbReference type="FunFam" id="3.30.460.10:FF:000016">
    <property type="entry name" value="Multifunctional CCA protein"/>
    <property type="match status" value="1"/>
</dbReference>
<dbReference type="Gene3D" id="3.30.460.10">
    <property type="entry name" value="Beta Polymerase, domain 2"/>
    <property type="match status" value="1"/>
</dbReference>
<dbReference type="Gene3D" id="1.10.3090.10">
    <property type="entry name" value="cca-adding enzyme, domain 2"/>
    <property type="match status" value="1"/>
</dbReference>
<dbReference type="HAMAP" id="MF_01261">
    <property type="entry name" value="CCA_bact_type1"/>
    <property type="match status" value="1"/>
</dbReference>
<dbReference type="HAMAP" id="MF_01262">
    <property type="entry name" value="CCA_bact_type2"/>
    <property type="match status" value="1"/>
</dbReference>
<dbReference type="InterPro" id="IPR012006">
    <property type="entry name" value="CCA_bact"/>
</dbReference>
<dbReference type="InterPro" id="IPR003607">
    <property type="entry name" value="HD/PDEase_dom"/>
</dbReference>
<dbReference type="InterPro" id="IPR006674">
    <property type="entry name" value="HD_domain"/>
</dbReference>
<dbReference type="InterPro" id="IPR043519">
    <property type="entry name" value="NT_sf"/>
</dbReference>
<dbReference type="InterPro" id="IPR002646">
    <property type="entry name" value="PolA_pol_head_dom"/>
</dbReference>
<dbReference type="InterPro" id="IPR032828">
    <property type="entry name" value="PolyA_RNA-bd"/>
</dbReference>
<dbReference type="InterPro" id="IPR050124">
    <property type="entry name" value="tRNA_CCA-adding_enzyme"/>
</dbReference>
<dbReference type="NCBIfam" id="NF008137">
    <property type="entry name" value="PRK10885.1"/>
    <property type="match status" value="1"/>
</dbReference>
<dbReference type="PANTHER" id="PTHR47545">
    <property type="entry name" value="MULTIFUNCTIONAL CCA PROTEIN"/>
    <property type="match status" value="1"/>
</dbReference>
<dbReference type="PANTHER" id="PTHR47545:SF1">
    <property type="entry name" value="MULTIFUNCTIONAL CCA PROTEIN"/>
    <property type="match status" value="1"/>
</dbReference>
<dbReference type="Pfam" id="PF01966">
    <property type="entry name" value="HD"/>
    <property type="match status" value="1"/>
</dbReference>
<dbReference type="Pfam" id="PF01743">
    <property type="entry name" value="PolyA_pol"/>
    <property type="match status" value="1"/>
</dbReference>
<dbReference type="Pfam" id="PF12627">
    <property type="entry name" value="PolyA_pol_RNAbd"/>
    <property type="match status" value="1"/>
</dbReference>
<dbReference type="PIRSF" id="PIRSF000813">
    <property type="entry name" value="CCA_bact"/>
    <property type="match status" value="1"/>
</dbReference>
<dbReference type="SUPFAM" id="SSF81301">
    <property type="entry name" value="Nucleotidyltransferase"/>
    <property type="match status" value="1"/>
</dbReference>
<dbReference type="SUPFAM" id="SSF81891">
    <property type="entry name" value="Poly A polymerase C-terminal region-like"/>
    <property type="match status" value="1"/>
</dbReference>
<dbReference type="PROSITE" id="PS51831">
    <property type="entry name" value="HD"/>
    <property type="match status" value="1"/>
</dbReference>
<name>CCA_ECODH</name>
<accession>B1XG61</accession>
<keyword id="KW-0067">ATP-binding</keyword>
<keyword id="KW-0378">Hydrolase</keyword>
<keyword id="KW-0460">Magnesium</keyword>
<keyword id="KW-0479">Metal-binding</keyword>
<keyword id="KW-0511">Multifunctional enzyme</keyword>
<keyword id="KW-0533">Nickel</keyword>
<keyword id="KW-0547">Nucleotide-binding</keyword>
<keyword id="KW-0548">Nucleotidyltransferase</keyword>
<keyword id="KW-0692">RNA repair</keyword>
<keyword id="KW-0694">RNA-binding</keyword>
<keyword id="KW-0808">Transferase</keyword>
<keyword id="KW-0819">tRNA processing</keyword>
<feature type="chain" id="PRO_1000140034" description="Multifunctional CCA protein">
    <location>
        <begin position="1"/>
        <end position="412"/>
    </location>
</feature>
<feature type="domain" description="HD" evidence="1">
    <location>
        <begin position="228"/>
        <end position="329"/>
    </location>
</feature>
<feature type="binding site" evidence="1">
    <location>
        <position position="8"/>
    </location>
    <ligand>
        <name>ATP</name>
        <dbReference type="ChEBI" id="CHEBI:30616"/>
    </ligand>
</feature>
<feature type="binding site" evidence="1">
    <location>
        <position position="8"/>
    </location>
    <ligand>
        <name>CTP</name>
        <dbReference type="ChEBI" id="CHEBI:37563"/>
    </ligand>
</feature>
<feature type="binding site" evidence="1">
    <location>
        <position position="11"/>
    </location>
    <ligand>
        <name>ATP</name>
        <dbReference type="ChEBI" id="CHEBI:30616"/>
    </ligand>
</feature>
<feature type="binding site" evidence="1">
    <location>
        <position position="11"/>
    </location>
    <ligand>
        <name>CTP</name>
        <dbReference type="ChEBI" id="CHEBI:37563"/>
    </ligand>
</feature>
<feature type="binding site" evidence="1">
    <location>
        <position position="21"/>
    </location>
    <ligand>
        <name>Mg(2+)</name>
        <dbReference type="ChEBI" id="CHEBI:18420"/>
    </ligand>
</feature>
<feature type="binding site" evidence="1">
    <location>
        <position position="23"/>
    </location>
    <ligand>
        <name>Mg(2+)</name>
        <dbReference type="ChEBI" id="CHEBI:18420"/>
    </ligand>
</feature>
<feature type="binding site" evidence="1">
    <location>
        <position position="91"/>
    </location>
    <ligand>
        <name>ATP</name>
        <dbReference type="ChEBI" id="CHEBI:30616"/>
    </ligand>
</feature>
<feature type="binding site" evidence="1">
    <location>
        <position position="91"/>
    </location>
    <ligand>
        <name>CTP</name>
        <dbReference type="ChEBI" id="CHEBI:37563"/>
    </ligand>
</feature>
<feature type="binding site" evidence="1">
    <location>
        <position position="137"/>
    </location>
    <ligand>
        <name>ATP</name>
        <dbReference type="ChEBI" id="CHEBI:30616"/>
    </ligand>
</feature>
<feature type="binding site" evidence="1">
    <location>
        <position position="137"/>
    </location>
    <ligand>
        <name>CTP</name>
        <dbReference type="ChEBI" id="CHEBI:37563"/>
    </ligand>
</feature>
<feature type="binding site" evidence="1">
    <location>
        <position position="140"/>
    </location>
    <ligand>
        <name>ATP</name>
        <dbReference type="ChEBI" id="CHEBI:30616"/>
    </ligand>
</feature>
<feature type="binding site" evidence="1">
    <location>
        <position position="140"/>
    </location>
    <ligand>
        <name>CTP</name>
        <dbReference type="ChEBI" id="CHEBI:37563"/>
    </ligand>
</feature>
<evidence type="ECO:0000255" key="1">
    <source>
        <dbReference type="HAMAP-Rule" id="MF_01261"/>
    </source>
</evidence>
<sequence>MKIYLVGGAVRDALLGLPVKDRDWVVVGSTPQEMLDAGYQQVGRDFPVFLHPQTHEEYALARTERKSGSGYTGFTCYAAPDVTLEDDLKRRDLTINALAQDDNGEIIDPYNGLGDLQNRLLRHVSPAFGEDPLRVLRVARFAARYAHLGFRIADETLALMREMTHAGELEHLTPERVWKETESALTTRNPQVFFQVLRDCGALRVLFPEIDALFGVPAPAKWHPEIDTGIHTLMTLSMAAMLSPQVDVRFATLCHDLGKGLTPPELWPRHHGHGPAGVKLVEQLCQRLRVPNEIRDLARLVAEFHDLIHTFPMLNPKTIVKLFDSIDAWRKPQRVEQLALTSEADVRGRTGFESADYPQGRWLREAWEVAQSVPTKAVVEAGFKGVEIREELTRRRIAAVASWKEQRCPKPE</sequence>
<proteinExistence type="inferred from homology"/>
<protein>
    <recommendedName>
        <fullName evidence="1">Multifunctional CCA protein</fullName>
    </recommendedName>
    <domain>
        <recommendedName>
            <fullName evidence="1">CCA-adding enzyme</fullName>
            <ecNumber evidence="1">2.7.7.72</ecNumber>
        </recommendedName>
        <alternativeName>
            <fullName evidence="1">CCA tRNA nucleotidyltransferase</fullName>
        </alternativeName>
        <alternativeName>
            <fullName evidence="1">tRNA CCA-pyrophosphorylase</fullName>
        </alternativeName>
        <alternativeName>
            <fullName evidence="1">tRNA adenylyl-/cytidylyl-transferase</fullName>
        </alternativeName>
        <alternativeName>
            <fullName evidence="1">tRNA nucleotidyltransferase</fullName>
        </alternativeName>
        <alternativeName>
            <fullName evidence="1">tRNA-NT</fullName>
        </alternativeName>
    </domain>
    <domain>
        <recommendedName>
            <fullName evidence="1">2'-nucleotidase</fullName>
            <ecNumber evidence="1">3.1.3.-</ecNumber>
        </recommendedName>
    </domain>
    <domain>
        <recommendedName>
            <fullName evidence="1">2',3'-cyclic phosphodiesterase</fullName>
            <ecNumber evidence="1">3.1.4.-</ecNumber>
        </recommendedName>
    </domain>
    <domain>
        <recommendedName>
            <fullName evidence="1">Phosphatase</fullName>
            <ecNumber evidence="1">3.1.3.-</ecNumber>
        </recommendedName>
    </domain>
</protein>